<gene>
    <name type="primary">phoE</name>
</gene>
<dbReference type="EMBL" id="M28295">
    <property type="protein sequence ID" value="AAA25121.1"/>
    <property type="molecule type" value="Genomic_DNA"/>
</dbReference>
<dbReference type="SMR" id="P30704"/>
<dbReference type="GO" id="GO:0009279">
    <property type="term" value="C:cell outer membrane"/>
    <property type="evidence" value="ECO:0007669"/>
    <property type="project" value="UniProtKB-SubCell"/>
</dbReference>
<dbReference type="GO" id="GO:0046930">
    <property type="term" value="C:pore complex"/>
    <property type="evidence" value="ECO:0007669"/>
    <property type="project" value="UniProtKB-KW"/>
</dbReference>
<dbReference type="GO" id="GO:0015288">
    <property type="term" value="F:porin activity"/>
    <property type="evidence" value="ECO:0007669"/>
    <property type="project" value="UniProtKB-KW"/>
</dbReference>
<dbReference type="GO" id="GO:0034220">
    <property type="term" value="P:monoatomic ion transmembrane transport"/>
    <property type="evidence" value="ECO:0007669"/>
    <property type="project" value="InterPro"/>
</dbReference>
<dbReference type="CDD" id="cd00342">
    <property type="entry name" value="gram_neg_porins"/>
    <property type="match status" value="1"/>
</dbReference>
<dbReference type="FunFam" id="2.40.160.10:FF:000002">
    <property type="entry name" value="Outer membrane porin F"/>
    <property type="match status" value="1"/>
</dbReference>
<dbReference type="Gene3D" id="2.40.160.10">
    <property type="entry name" value="Porin"/>
    <property type="match status" value="1"/>
</dbReference>
<dbReference type="InterPro" id="IPR050298">
    <property type="entry name" value="Gram-neg_bact_OMP"/>
</dbReference>
<dbReference type="InterPro" id="IPR033900">
    <property type="entry name" value="Gram_neg_porin_domain"/>
</dbReference>
<dbReference type="InterPro" id="IPR023614">
    <property type="entry name" value="Porin_dom_sf"/>
</dbReference>
<dbReference type="InterPro" id="IPR001897">
    <property type="entry name" value="Porin_gammaproteobac"/>
</dbReference>
<dbReference type="InterPro" id="IPR001702">
    <property type="entry name" value="Porin_Gram-ve"/>
</dbReference>
<dbReference type="InterPro" id="IPR013793">
    <property type="entry name" value="Porin_Gram-ve_CS"/>
</dbReference>
<dbReference type="NCBIfam" id="NF007544">
    <property type="entry name" value="PRK10159.1"/>
    <property type="match status" value="1"/>
</dbReference>
<dbReference type="PANTHER" id="PTHR34501:SF5">
    <property type="entry name" value="OUTER MEMBRANE PORIN PHOE"/>
    <property type="match status" value="1"/>
</dbReference>
<dbReference type="PANTHER" id="PTHR34501">
    <property type="entry name" value="PROTEIN YDDL-RELATED"/>
    <property type="match status" value="1"/>
</dbReference>
<dbReference type="Pfam" id="PF00267">
    <property type="entry name" value="Porin_1"/>
    <property type="match status" value="1"/>
</dbReference>
<dbReference type="PRINTS" id="PR00183">
    <property type="entry name" value="ECOLIPORIN"/>
</dbReference>
<dbReference type="PRINTS" id="PR00182">
    <property type="entry name" value="ECOLNEIPORIN"/>
</dbReference>
<dbReference type="SUPFAM" id="SSF56935">
    <property type="entry name" value="Porins"/>
    <property type="match status" value="1"/>
</dbReference>
<dbReference type="PROSITE" id="PS00576">
    <property type="entry name" value="GRAM_NEG_PORIN"/>
    <property type="match status" value="1"/>
</dbReference>
<accession>P30704</accession>
<organism>
    <name type="scientific">Klebsiella pneumoniae</name>
    <dbReference type="NCBI Taxonomy" id="573"/>
    <lineage>
        <taxon>Bacteria</taxon>
        <taxon>Pseudomonadati</taxon>
        <taxon>Pseudomonadota</taxon>
        <taxon>Gammaproteobacteria</taxon>
        <taxon>Enterobacterales</taxon>
        <taxon>Enterobacteriaceae</taxon>
        <taxon>Klebsiella/Raoultella group</taxon>
        <taxon>Klebsiella</taxon>
        <taxon>Klebsiella pneumoniae complex</taxon>
    </lineage>
</organism>
<keyword id="KW-0998">Cell outer membrane</keyword>
<keyword id="KW-0406">Ion transport</keyword>
<keyword id="KW-0472">Membrane</keyword>
<keyword id="KW-0626">Porin</keyword>
<keyword id="KW-0732">Signal</keyword>
<keyword id="KW-0346">Stress response</keyword>
<keyword id="KW-0812">Transmembrane</keyword>
<keyword id="KW-1134">Transmembrane beta strand</keyword>
<keyword id="KW-0813">Transport</keyword>
<proteinExistence type="evidence at transcript level"/>
<reference key="1">
    <citation type="journal article" date="1987" name="Eur. J. Biochem.">
        <title>A comparative study on the phoE genes of three enterobacterial species. Implications for structure-function relationships in a pore-forming protein of the outer membrane.</title>
        <authorList>
            <person name="van der Ley P."/>
            <person name="Bekkers A."/>
            <person name="van Meersbergen J."/>
            <person name="Tommassen J."/>
        </authorList>
    </citation>
    <scope>NUCLEOTIDE SEQUENCE [GENOMIC DNA]</scope>
</reference>
<name>PHOE_KLEPN</name>
<protein>
    <recommendedName>
        <fullName>Outer membrane porin PhoE</fullName>
    </recommendedName>
    <alternativeName>
        <fullName>Outer membrane pore protein E</fullName>
    </alternativeName>
</protein>
<sequence>MKKSTLALMMMGFVASTATQAAEVYNKNANKLDVYGKIKAMHYFSDYDSKDGDQTYVRFGIKGETQINEDLTGYGRWESEFSGNKTESDSSQQKTRLAFAGVKLKNYGSFDYGRNLGALYDVEAWTDMFPEFGGDSSAQTDNFMTKRASGLATYRNTDFFGLVDGLDLTLQYQGKNEGREAKKQNGDGVGTSLSYDFGGTDFAVSAAYTSSDRTNDQNLLARAQGSKAEAWATGLKYDANNIYLATMYSETRKMTPISGGFANKAQNFEAVAQYQFDFGLRPSLGYVLSKGKDIEGVGSEDLVNYIDVGLTYYFNKNMNAFVDYKINQLKSDNKLGINDDDIVALGMTYQF</sequence>
<feature type="signal peptide" evidence="1">
    <location>
        <begin position="1"/>
        <end position="21"/>
    </location>
</feature>
<feature type="chain" id="PRO_0000025245" description="Outer membrane porin PhoE">
    <location>
        <begin position="22"/>
        <end position="351"/>
    </location>
</feature>
<comment type="function">
    <text>Uptake of inorganic phosphate, phosphorylated compounds, and some other negatively charged solutes.</text>
</comment>
<comment type="subunit">
    <text>Homotrimer.</text>
</comment>
<comment type="subcellular location">
    <subcellularLocation>
        <location>Cell outer membrane</location>
        <topology>Multi-pass membrane protein</topology>
    </subcellularLocation>
</comment>
<comment type="induction">
    <text>By phosphate starvation.</text>
</comment>
<comment type="similarity">
    <text evidence="2">Belongs to the Gram-negative porin family.</text>
</comment>
<evidence type="ECO:0000250" key="1"/>
<evidence type="ECO:0000305" key="2"/>